<reference key="1">
    <citation type="journal article" date="1997" name="Plant Mol. Biol.">
        <title>Characterization of a novel rice bZIP protein which binds to the alpha-globulin promoter.</title>
        <authorList>
            <person name="Nakase M."/>
            <person name="Aoki N."/>
            <person name="Matsuda T."/>
            <person name="Adachi T."/>
        </authorList>
    </citation>
    <scope>NUCLEOTIDE SEQUENCE [MRNA]</scope>
    <scope>FUNCTION</scope>
    <source>
        <strain>cv. Nipponbare</strain>
        <tissue>Endosperm</tissue>
    </source>
</reference>
<reference key="2">
    <citation type="journal article" date="2001" name="Proc. Natl. Acad. Sci. U.S.A.">
        <title>Expression of the REB transcriptional activator in rice grains improves the yield of recombinant proteins whose genes are controlled by a Reb-responsive promoter.</title>
        <authorList>
            <person name="Yang D."/>
            <person name="Wu L."/>
            <person name="Hwang Y.S."/>
            <person name="Chen L."/>
            <person name="Huang N."/>
        </authorList>
    </citation>
    <scope>NUCLEOTIDE SEQUENCE [GENOMIC DNA]</scope>
    <scope>FUNCTION</scope>
</reference>
<reference key="3">
    <citation type="journal article" date="2005" name="Nature">
        <title>The map-based sequence of the rice genome.</title>
        <authorList>
            <consortium name="International rice genome sequencing project (IRGSP)"/>
        </authorList>
    </citation>
    <scope>NUCLEOTIDE SEQUENCE [LARGE SCALE GENOMIC DNA]</scope>
    <source>
        <strain>cv. Nipponbare</strain>
    </source>
</reference>
<reference key="4">
    <citation type="journal article" date="2008" name="Nucleic Acids Res.">
        <title>The rice annotation project database (RAP-DB): 2008 update.</title>
        <authorList>
            <consortium name="The rice annotation project (RAP)"/>
        </authorList>
    </citation>
    <scope>GENOME REANNOTATION</scope>
    <source>
        <strain>cv. Nipponbare</strain>
    </source>
</reference>
<reference key="5">
    <citation type="journal article" date="2013" name="Rice">
        <title>Improvement of the Oryza sativa Nipponbare reference genome using next generation sequence and optical map data.</title>
        <authorList>
            <person name="Kawahara Y."/>
            <person name="de la Bastide M."/>
            <person name="Hamilton J.P."/>
            <person name="Kanamori H."/>
            <person name="McCombie W.R."/>
            <person name="Ouyang S."/>
            <person name="Schwartz D.C."/>
            <person name="Tanaka T."/>
            <person name="Wu J."/>
            <person name="Zhou S."/>
            <person name="Childs K.L."/>
            <person name="Davidson R.M."/>
            <person name="Lin H."/>
            <person name="Quesada-Ocampo L."/>
            <person name="Vaillancourt B."/>
            <person name="Sakai H."/>
            <person name="Lee S.S."/>
            <person name="Kim J."/>
            <person name="Numa H."/>
            <person name="Itoh T."/>
            <person name="Buell C.R."/>
            <person name="Matsumoto T."/>
        </authorList>
    </citation>
    <scope>GENOME REANNOTATION</scope>
    <source>
        <strain>cv. Nipponbare</strain>
    </source>
</reference>
<reference key="6">
    <citation type="submission" date="2002-01" db="EMBL/GenBank/DDBJ databases">
        <title>Oryza sativa bZIP protein (BZIP) mRNA, partial cds.</title>
        <authorList>
            <person name="Quanhong Y."/>
            <person name="Rihe P."/>
            <person name="Aisheng X."/>
            <person name="Xian L."/>
            <person name="Huiqin F."/>
        </authorList>
    </citation>
    <scope>NUCLEOTIDE SEQUENCE [MRNA] OF 187-425</scope>
</reference>
<reference key="7">
    <citation type="journal article" date="2001" name="J. Biol. Chem.">
        <title>A rice functional transcriptional activator, RISBZ1, responsible for endosperm-specific expression of storage protein genes through GCN4 motif.</title>
        <authorList>
            <person name="Onodera Y."/>
            <person name="Suzuki A."/>
            <person name="Wu C.Y."/>
            <person name="Washida H."/>
            <person name="Takaiwa F."/>
        </authorList>
    </citation>
    <scope>FUNCTION</scope>
    <scope>SUBUNIT</scope>
    <scope>DEVELOPMENTAL STAGE</scope>
</reference>
<reference key="8">
    <citation type="journal article" date="2008" name="Plant Physiol.">
        <title>Genomic survey and gene expression analysis of the basic leucine zipper transcription factor family in rice.</title>
        <authorList>
            <person name="Nijhawan A."/>
            <person name="Jain M."/>
            <person name="Tyagi A.K."/>
            <person name="Khurana J.P."/>
        </authorList>
    </citation>
    <scope>GENE FAMILY</scope>
    <scope>NOMENCLATURE</scope>
</reference>
<proteinExistence type="evidence at protein level"/>
<feature type="chain" id="PRO_0000441223" description="bZIP transcription factor RISBZ2">
    <location>
        <begin position="1"/>
        <end position="425"/>
    </location>
</feature>
<feature type="domain" description="bZIP" evidence="1">
    <location>
        <begin position="232"/>
        <end position="295"/>
    </location>
</feature>
<feature type="region of interest" description="Disordered" evidence="2">
    <location>
        <begin position="1"/>
        <end position="50"/>
    </location>
</feature>
<feature type="region of interest" description="Disordered" evidence="2">
    <location>
        <begin position="169"/>
        <end position="257"/>
    </location>
</feature>
<feature type="region of interest" description="Basic motif" evidence="1">
    <location>
        <begin position="234"/>
        <end position="253"/>
    </location>
</feature>
<feature type="region of interest" description="Leucine-zipper" evidence="1">
    <location>
        <begin position="260"/>
        <end position="274"/>
    </location>
</feature>
<feature type="region of interest" description="Disordered" evidence="2">
    <location>
        <begin position="334"/>
        <end position="354"/>
    </location>
</feature>
<feature type="compositionally biased region" description="Gly residues" evidence="2">
    <location>
        <begin position="30"/>
        <end position="50"/>
    </location>
</feature>
<feature type="compositionally biased region" description="Polar residues" evidence="2">
    <location>
        <begin position="171"/>
        <end position="182"/>
    </location>
</feature>
<feature type="compositionally biased region" description="Acidic residues" evidence="2">
    <location>
        <begin position="213"/>
        <end position="222"/>
    </location>
</feature>
<feature type="compositionally biased region" description="Basic and acidic residues" evidence="2">
    <location>
        <begin position="231"/>
        <end position="247"/>
    </location>
</feature>
<feature type="sequence conflict" description="In Ref. 1; BAA11431." evidence="9" ref="1">
    <original>N</original>
    <variation>I</variation>
    <location>
        <position position="169"/>
    </location>
</feature>
<feature type="sequence conflict" description="In Ref. 1; BAA11431." evidence="9" ref="1">
    <original>P</original>
    <variation>A</variation>
    <location>
        <position position="204"/>
    </location>
</feature>
<feature type="sequence conflict" description="In Ref. 6; AAL77201." evidence="9" ref="6">
    <original>A</original>
    <variation>T</variation>
    <location>
        <position position="304"/>
    </location>
</feature>
<feature type="sequence conflict" description="In Ref. 6; AAL77201." evidence="9" ref="6">
    <original>S</original>
    <variation>F</variation>
    <location>
        <position position="331"/>
    </location>
</feature>
<feature type="sequence conflict" description="In Ref. 6; AAL77201." evidence="9" ref="6">
    <original>DEDFV</original>
    <variation>EEDFF</variation>
    <location>
        <begin position="382"/>
        <end position="386"/>
    </location>
</feature>
<feature type="sequence conflict" description="In Ref. 6; AAL77201." evidence="9" ref="6">
    <original>A</original>
    <variation>P</variation>
    <location>
        <position position="399"/>
    </location>
</feature>
<gene>
    <name evidence="6" type="primary">RISBZ2</name>
    <name evidence="7" type="synonym">BZIP33</name>
    <name evidence="8" type="synonym">REB</name>
    <name evidence="12" type="ordered locus">Os03g0796900</name>
    <name evidence="11" type="ordered locus">LOC_Os03g58250</name>
    <name evidence="10" type="ORF">OSJNBa0094F01.19</name>
</gene>
<protein>
    <recommendedName>
        <fullName evidence="9">bZIP transcription factor RISBZ2</fullName>
    </recommendedName>
    <alternativeName>
        <fullName evidence="8">Rice endosperm bZIP</fullName>
    </alternativeName>
    <alternativeName>
        <fullName evidence="9">Rice seed bZIP2</fullName>
    </alternativeName>
    <alternativeName>
        <fullName evidence="7">bZIP transcription factor 33</fullName>
        <shortName evidence="7">OsbZIP33</shortName>
    </alternativeName>
</protein>
<name>RSBZ2_ORYSJ</name>
<dbReference type="EMBL" id="D78609">
    <property type="protein sequence ID" value="BAA11431.1"/>
    <property type="molecule type" value="mRNA"/>
</dbReference>
<dbReference type="EMBL" id="AF395819">
    <property type="protein sequence ID" value="AAL10017.1"/>
    <property type="status" value="ALT_SEQ"/>
    <property type="molecule type" value="Genomic_DNA"/>
</dbReference>
<dbReference type="EMBL" id="AC093713">
    <property type="protein sequence ID" value="AAP44683.1"/>
    <property type="molecule type" value="Genomic_DNA"/>
</dbReference>
<dbReference type="EMBL" id="DP000009">
    <property type="protein sequence ID" value="ABF99347.1"/>
    <property type="molecule type" value="Genomic_DNA"/>
</dbReference>
<dbReference type="EMBL" id="AP008209">
    <property type="protein sequence ID" value="BAF13472.1"/>
    <property type="molecule type" value="Genomic_DNA"/>
</dbReference>
<dbReference type="EMBL" id="AP014959">
    <property type="protein sequence ID" value="BAS86847.1"/>
    <property type="molecule type" value="Genomic_DNA"/>
</dbReference>
<dbReference type="EMBL" id="AY072929">
    <property type="protein sequence ID" value="AAL77201.1"/>
    <property type="molecule type" value="mRNA"/>
</dbReference>
<dbReference type="PIR" id="T03605">
    <property type="entry name" value="T03605"/>
</dbReference>
<dbReference type="SMR" id="Q7X9A8"/>
<dbReference type="FunCoup" id="Q7X9A8">
    <property type="interactions" value="130"/>
</dbReference>
<dbReference type="IntAct" id="Q7X9A8">
    <property type="interactions" value="1"/>
</dbReference>
<dbReference type="STRING" id="39947.Q7X9A8"/>
<dbReference type="PaxDb" id="39947-Q7X9A8"/>
<dbReference type="EnsemblPlants" id="Os03t0796900-01">
    <property type="protein sequence ID" value="Os03t0796900-01"/>
    <property type="gene ID" value="Os03g0796900"/>
</dbReference>
<dbReference type="Gramene" id="Os03t0796900-01">
    <property type="protein sequence ID" value="Os03t0796900-01"/>
    <property type="gene ID" value="Os03g0796900"/>
</dbReference>
<dbReference type="KEGG" id="dosa:Os03g0796900"/>
<dbReference type="KEGG" id="osa:4334424"/>
<dbReference type="eggNOG" id="ENOG502QS0A">
    <property type="taxonomic scope" value="Eukaryota"/>
</dbReference>
<dbReference type="HOGENOM" id="CLU_037575_1_1_1"/>
<dbReference type="InParanoid" id="Q7X9A8"/>
<dbReference type="OMA" id="GNAMNRC"/>
<dbReference type="OrthoDB" id="664875at2759"/>
<dbReference type="Proteomes" id="UP000000763">
    <property type="component" value="Chromosome 3"/>
</dbReference>
<dbReference type="Proteomes" id="UP000059680">
    <property type="component" value="Chromosome 3"/>
</dbReference>
<dbReference type="GO" id="GO:0005634">
    <property type="term" value="C:nucleus"/>
    <property type="evidence" value="ECO:0007669"/>
    <property type="project" value="UniProtKB-SubCell"/>
</dbReference>
<dbReference type="GO" id="GO:0003677">
    <property type="term" value="F:DNA binding"/>
    <property type="evidence" value="ECO:0007669"/>
    <property type="project" value="UniProtKB-KW"/>
</dbReference>
<dbReference type="GO" id="GO:0003700">
    <property type="term" value="F:DNA-binding transcription factor activity"/>
    <property type="evidence" value="ECO:0007669"/>
    <property type="project" value="InterPro"/>
</dbReference>
<dbReference type="CDD" id="cd14702">
    <property type="entry name" value="bZIP_plant_GBF1"/>
    <property type="match status" value="1"/>
</dbReference>
<dbReference type="FunFam" id="1.20.5.170:FF:000020">
    <property type="entry name" value="BZIP transcription factor"/>
    <property type="match status" value="1"/>
</dbReference>
<dbReference type="Gene3D" id="1.20.5.170">
    <property type="match status" value="1"/>
</dbReference>
<dbReference type="InterPro" id="IPR020983">
    <property type="entry name" value="Basic_leucine-zipper_C"/>
</dbReference>
<dbReference type="InterPro" id="IPR004827">
    <property type="entry name" value="bZIP"/>
</dbReference>
<dbReference type="InterPro" id="IPR045314">
    <property type="entry name" value="bZIP_plant_GBF1"/>
</dbReference>
<dbReference type="InterPro" id="IPR046347">
    <property type="entry name" value="bZIP_sf"/>
</dbReference>
<dbReference type="PANTHER" id="PTHR46408">
    <property type="entry name" value="BASIC LEUCINE ZIPPER 63"/>
    <property type="match status" value="1"/>
</dbReference>
<dbReference type="PANTHER" id="PTHR46408:SF10">
    <property type="entry name" value="BASIC LEUCINE ZIPPER 63"/>
    <property type="match status" value="1"/>
</dbReference>
<dbReference type="Pfam" id="PF00170">
    <property type="entry name" value="bZIP_1"/>
    <property type="match status" value="1"/>
</dbReference>
<dbReference type="Pfam" id="PF12498">
    <property type="entry name" value="bZIP_C"/>
    <property type="match status" value="1"/>
</dbReference>
<dbReference type="SMART" id="SM00338">
    <property type="entry name" value="BRLZ"/>
    <property type="match status" value="1"/>
</dbReference>
<dbReference type="SUPFAM" id="SSF57959">
    <property type="entry name" value="Leucine zipper domain"/>
    <property type="match status" value="1"/>
</dbReference>
<dbReference type="PROSITE" id="PS50217">
    <property type="entry name" value="BZIP"/>
    <property type="match status" value="1"/>
</dbReference>
<evidence type="ECO:0000255" key="1">
    <source>
        <dbReference type="PROSITE-ProRule" id="PRU00978"/>
    </source>
</evidence>
<evidence type="ECO:0000256" key="2">
    <source>
        <dbReference type="SAM" id="MobiDB-lite"/>
    </source>
</evidence>
<evidence type="ECO:0000269" key="3">
    <source>
    </source>
</evidence>
<evidence type="ECO:0000269" key="4">
    <source>
    </source>
</evidence>
<evidence type="ECO:0000269" key="5">
    <source>
    </source>
</evidence>
<evidence type="ECO:0000303" key="6">
    <source>
    </source>
</evidence>
<evidence type="ECO:0000303" key="7">
    <source>
    </source>
</evidence>
<evidence type="ECO:0000303" key="8">
    <source>
    </source>
</evidence>
<evidence type="ECO:0000305" key="9"/>
<evidence type="ECO:0000312" key="10">
    <source>
        <dbReference type="EMBL" id="AAP44683.1"/>
    </source>
</evidence>
<evidence type="ECO:0000312" key="11">
    <source>
        <dbReference type="EMBL" id="ABF99347.1"/>
    </source>
</evidence>
<evidence type="ECO:0000312" key="12">
    <source>
        <dbReference type="EMBL" id="BAF13472.1"/>
    </source>
</evidence>
<sequence length="425" mass="44253">MERVFSVEEISDPFWVPPPPPQSAAAAQQQGGGGVASGGGGGVAGGGGGGNAMNRCPSEWYFQKFLEEAVLDSPVPNPSPRAEAGGIRGAGGVVPVDVKQPQLSAAAAAAATTSAVVDPVEYNAMLKQKLEKDLAAVAMWRASGTVPPERPGAGSSLLNADVSHIGAPNSIGGNATPVQNMLSGPSGGSGSQLVQNVDVLVKQPTSSSSREQSDDDDMEGEAETTGTARPADQRLQRRKQSNRESARRSRSRKAAHLNELEAQVSQLRVENSSLLRRLADVNQKYNDAAVDNRVLKADVETLRAKVKMAEDSVKRVTGMNALFPAASDMSSLSMPFNSSPSEATSDAAVPIQDDPNNYFATNNDIGGNNNYMPDIPSSAQEDEDFVNGALAAGKIGRTASLQRVASLEHLQKRMCGGPASSGSTS</sequence>
<keyword id="KW-0238">DNA-binding</keyword>
<keyword id="KW-0539">Nucleus</keyword>
<keyword id="KW-1185">Reference proteome</keyword>
<keyword id="KW-0804">Transcription</keyword>
<keyword id="KW-0805">Transcription regulation</keyword>
<accession>Q7X9A8</accession>
<accession>P93405</accession>
<accession>Q8RU62</accession>
<accession>Q946H5</accession>
<organism>
    <name type="scientific">Oryza sativa subsp. japonica</name>
    <name type="common">Rice</name>
    <dbReference type="NCBI Taxonomy" id="39947"/>
    <lineage>
        <taxon>Eukaryota</taxon>
        <taxon>Viridiplantae</taxon>
        <taxon>Streptophyta</taxon>
        <taxon>Embryophyta</taxon>
        <taxon>Tracheophyta</taxon>
        <taxon>Spermatophyta</taxon>
        <taxon>Magnoliopsida</taxon>
        <taxon>Liliopsida</taxon>
        <taxon>Poales</taxon>
        <taxon>Poaceae</taxon>
        <taxon>BOP clade</taxon>
        <taxon>Oryzoideae</taxon>
        <taxon>Oryzeae</taxon>
        <taxon>Oryzinae</taxon>
        <taxon>Oryza</taxon>
        <taxon>Oryza sativa</taxon>
    </lineage>
</organism>
<comment type="function">
    <text evidence="3 4 5">Transcriptional activator that binds to the DNA specific sequence 5'-GCCACGT[AC]AG-3' found in the alpha-globulin gene promoter (PubMed:11572990, PubMed:9049271). Does not bind to promoters of other major storage genes such as glutelin, prolamin and albumin (PubMed:9049271). Binds to the DNA specific sequence 5'-TGAGTCA-3' found in seed storage protein gene promoters (PubMed:11133985).</text>
</comment>
<comment type="subunit">
    <text evidence="3">Heterodimer with RISBZ1/BZIP58.</text>
</comment>
<comment type="subcellular location">
    <subcellularLocation>
        <location evidence="1">Nucleus</location>
    </subcellularLocation>
</comment>
<comment type="developmental stage">
    <text evidence="3">Expressed in developing seeds from 5 to 30 days after flowering (DAF).</text>
</comment>
<comment type="sequence caution" evidence="9">
    <conflict type="erroneous gene model prediction">
        <sequence resource="EMBL-CDS" id="AAL10017"/>
    </conflict>
</comment>